<organism>
    <name type="scientific">Pyrenophora tritici-repentis (strain Pt-1C-BFP)</name>
    <name type="common">Wheat tan spot fungus</name>
    <name type="synonym">Drechslera tritici-repentis</name>
    <dbReference type="NCBI Taxonomy" id="426418"/>
    <lineage>
        <taxon>Eukaryota</taxon>
        <taxon>Fungi</taxon>
        <taxon>Dikarya</taxon>
        <taxon>Ascomycota</taxon>
        <taxon>Pezizomycotina</taxon>
        <taxon>Dothideomycetes</taxon>
        <taxon>Pleosporomycetidae</taxon>
        <taxon>Pleosporales</taxon>
        <taxon>Pleosporineae</taxon>
        <taxon>Pleosporaceae</taxon>
        <taxon>Pyrenophora</taxon>
    </lineage>
</organism>
<comment type="function">
    <text evidence="1">Catalyzes the radical-mediated insertion of two sulfur atoms into the C-6 and C-8 positions of the octanoyl moiety bound to the lipoyl domains of lipoate-dependent enzymes, thereby converting the octanoylated domains into lipoylated derivatives.</text>
</comment>
<comment type="catalytic activity">
    <reaction evidence="1">
        <text>[[Fe-S] cluster scaffold protein carrying a second [4Fe-4S](2+) cluster] + N(6)-octanoyl-L-lysyl-[protein] + 2 oxidized [2Fe-2S]-[ferredoxin] + 2 S-adenosyl-L-methionine + 4 H(+) = [[Fe-S] cluster scaffold protein] + N(6)-[(R)-dihydrolipoyl]-L-lysyl-[protein] + 4 Fe(3+) + 2 hydrogen sulfide + 2 5'-deoxyadenosine + 2 L-methionine + 2 reduced [2Fe-2S]-[ferredoxin]</text>
        <dbReference type="Rhea" id="RHEA:16585"/>
        <dbReference type="Rhea" id="RHEA-COMP:9928"/>
        <dbReference type="Rhea" id="RHEA-COMP:10000"/>
        <dbReference type="Rhea" id="RHEA-COMP:10001"/>
        <dbReference type="Rhea" id="RHEA-COMP:10475"/>
        <dbReference type="Rhea" id="RHEA-COMP:14568"/>
        <dbReference type="Rhea" id="RHEA-COMP:14569"/>
        <dbReference type="ChEBI" id="CHEBI:15378"/>
        <dbReference type="ChEBI" id="CHEBI:17319"/>
        <dbReference type="ChEBI" id="CHEBI:29034"/>
        <dbReference type="ChEBI" id="CHEBI:29919"/>
        <dbReference type="ChEBI" id="CHEBI:33722"/>
        <dbReference type="ChEBI" id="CHEBI:33737"/>
        <dbReference type="ChEBI" id="CHEBI:33738"/>
        <dbReference type="ChEBI" id="CHEBI:57844"/>
        <dbReference type="ChEBI" id="CHEBI:59789"/>
        <dbReference type="ChEBI" id="CHEBI:78809"/>
        <dbReference type="ChEBI" id="CHEBI:83100"/>
        <dbReference type="EC" id="2.8.1.8"/>
    </reaction>
</comment>
<comment type="cofactor">
    <cofactor evidence="1">
        <name>[4Fe-4S] cluster</name>
        <dbReference type="ChEBI" id="CHEBI:49883"/>
    </cofactor>
    <text evidence="1">Binds 2 [4Fe-4S] clusters per subunit. One cluster is coordinated with 3 cysteines and an exchangeable S-adenosyl-L-methionine.</text>
</comment>
<comment type="pathway">
    <text evidence="1">Protein modification; protein lipoylation via endogenous pathway; protein N(6)-(lipoyl)lysine from octanoyl-[acyl-carrier-protein]: step 2/2.</text>
</comment>
<comment type="subcellular location">
    <subcellularLocation>
        <location evidence="1">Mitochondrion</location>
    </subcellularLocation>
</comment>
<comment type="similarity">
    <text evidence="1">Belongs to the radical SAM superfamily. Lipoyl synthase family.</text>
</comment>
<dbReference type="EC" id="2.8.1.8" evidence="1"/>
<dbReference type="EMBL" id="DS231621">
    <property type="protein sequence ID" value="EDU49880.1"/>
    <property type="molecule type" value="Genomic_DNA"/>
</dbReference>
<dbReference type="RefSeq" id="XP_001937293.1">
    <property type="nucleotide sequence ID" value="XM_001937258.1"/>
</dbReference>
<dbReference type="SMR" id="B2WBE8"/>
<dbReference type="FunCoup" id="B2WBE8">
    <property type="interactions" value="572"/>
</dbReference>
<dbReference type="STRING" id="426418.B2WBE8"/>
<dbReference type="EnsemblFungi" id="EDU49880">
    <property type="protein sequence ID" value="EDU49880"/>
    <property type="gene ID" value="PTRG_06961"/>
</dbReference>
<dbReference type="GeneID" id="6345232"/>
<dbReference type="KEGG" id="ptrr:6345232"/>
<dbReference type="eggNOG" id="KOG2672">
    <property type="taxonomic scope" value="Eukaryota"/>
</dbReference>
<dbReference type="HOGENOM" id="CLU_033144_2_0_1"/>
<dbReference type="InParanoid" id="B2WBE8"/>
<dbReference type="OMA" id="PYCDIDF"/>
<dbReference type="OrthoDB" id="3280at28556"/>
<dbReference type="UniPathway" id="UPA00538">
    <property type="reaction ID" value="UER00593"/>
</dbReference>
<dbReference type="Proteomes" id="UP000001471">
    <property type="component" value="Unassembled WGS sequence"/>
</dbReference>
<dbReference type="GO" id="GO:0005739">
    <property type="term" value="C:mitochondrion"/>
    <property type="evidence" value="ECO:0007669"/>
    <property type="project" value="UniProtKB-SubCell"/>
</dbReference>
<dbReference type="GO" id="GO:0051539">
    <property type="term" value="F:4 iron, 4 sulfur cluster binding"/>
    <property type="evidence" value="ECO:0007669"/>
    <property type="project" value="UniProtKB-UniRule"/>
</dbReference>
<dbReference type="GO" id="GO:0016992">
    <property type="term" value="F:lipoate synthase activity"/>
    <property type="evidence" value="ECO:0007669"/>
    <property type="project" value="UniProtKB-UniRule"/>
</dbReference>
<dbReference type="GO" id="GO:0046872">
    <property type="term" value="F:metal ion binding"/>
    <property type="evidence" value="ECO:0007669"/>
    <property type="project" value="UniProtKB-KW"/>
</dbReference>
<dbReference type="CDD" id="cd01335">
    <property type="entry name" value="Radical_SAM"/>
    <property type="match status" value="1"/>
</dbReference>
<dbReference type="FunFam" id="3.20.20.70:FF:000036">
    <property type="entry name" value="Lipoyl synthase, mitochondrial"/>
    <property type="match status" value="1"/>
</dbReference>
<dbReference type="Gene3D" id="3.20.20.70">
    <property type="entry name" value="Aldolase class I"/>
    <property type="match status" value="1"/>
</dbReference>
<dbReference type="HAMAP" id="MF_00206">
    <property type="entry name" value="Lipoyl_synth"/>
    <property type="match status" value="1"/>
</dbReference>
<dbReference type="InterPro" id="IPR013785">
    <property type="entry name" value="Aldolase_TIM"/>
</dbReference>
<dbReference type="InterPro" id="IPR006638">
    <property type="entry name" value="Elp3/MiaA/NifB-like_rSAM"/>
</dbReference>
<dbReference type="InterPro" id="IPR031691">
    <property type="entry name" value="LIAS_N"/>
</dbReference>
<dbReference type="InterPro" id="IPR003698">
    <property type="entry name" value="Lipoyl_synth"/>
</dbReference>
<dbReference type="InterPro" id="IPR007197">
    <property type="entry name" value="rSAM"/>
</dbReference>
<dbReference type="NCBIfam" id="TIGR00510">
    <property type="entry name" value="lipA"/>
    <property type="match status" value="1"/>
</dbReference>
<dbReference type="NCBIfam" id="NF004019">
    <property type="entry name" value="PRK05481.1"/>
    <property type="match status" value="1"/>
</dbReference>
<dbReference type="NCBIfam" id="NF009544">
    <property type="entry name" value="PRK12928.1"/>
    <property type="match status" value="1"/>
</dbReference>
<dbReference type="PANTHER" id="PTHR10949">
    <property type="entry name" value="LIPOYL SYNTHASE"/>
    <property type="match status" value="1"/>
</dbReference>
<dbReference type="PANTHER" id="PTHR10949:SF0">
    <property type="entry name" value="LIPOYL SYNTHASE, MITOCHONDRIAL"/>
    <property type="match status" value="1"/>
</dbReference>
<dbReference type="Pfam" id="PF16881">
    <property type="entry name" value="LIAS_N"/>
    <property type="match status" value="1"/>
</dbReference>
<dbReference type="Pfam" id="PF04055">
    <property type="entry name" value="Radical_SAM"/>
    <property type="match status" value="1"/>
</dbReference>
<dbReference type="PIRSF" id="PIRSF005963">
    <property type="entry name" value="Lipoyl_synth"/>
    <property type="match status" value="1"/>
</dbReference>
<dbReference type="SFLD" id="SFLDF00271">
    <property type="entry name" value="lipoyl_synthase"/>
    <property type="match status" value="1"/>
</dbReference>
<dbReference type="SFLD" id="SFLDG01058">
    <property type="entry name" value="lipoyl_synthase_like"/>
    <property type="match status" value="1"/>
</dbReference>
<dbReference type="SMART" id="SM00729">
    <property type="entry name" value="Elp3"/>
    <property type="match status" value="1"/>
</dbReference>
<dbReference type="SUPFAM" id="SSF102114">
    <property type="entry name" value="Radical SAM enzymes"/>
    <property type="match status" value="1"/>
</dbReference>
<dbReference type="PROSITE" id="PS51918">
    <property type="entry name" value="RADICAL_SAM"/>
    <property type="match status" value="1"/>
</dbReference>
<accession>B2WBE8</accession>
<feature type="transit peptide" description="Mitochondrion" evidence="1">
    <location>
        <begin position="1"/>
        <end position="30"/>
    </location>
</feature>
<feature type="chain" id="PRO_0000398285" description="Lipoyl synthase, mitochondrial">
    <location>
        <begin position="31"/>
        <end position="417"/>
    </location>
</feature>
<feature type="domain" description="Radical SAM core" evidence="2">
    <location>
        <begin position="146"/>
        <end position="367"/>
    </location>
</feature>
<feature type="region of interest" description="Disordered" evidence="3">
    <location>
        <begin position="23"/>
        <end position="62"/>
    </location>
</feature>
<feature type="compositionally biased region" description="Polar residues" evidence="3">
    <location>
        <begin position="30"/>
        <end position="41"/>
    </location>
</feature>
<feature type="compositionally biased region" description="Polar residues" evidence="3">
    <location>
        <begin position="51"/>
        <end position="61"/>
    </location>
</feature>
<feature type="binding site" evidence="1">
    <location>
        <position position="132"/>
    </location>
    <ligand>
        <name>[4Fe-4S] cluster</name>
        <dbReference type="ChEBI" id="CHEBI:49883"/>
        <label>1</label>
    </ligand>
</feature>
<feature type="binding site" evidence="1">
    <location>
        <position position="137"/>
    </location>
    <ligand>
        <name>[4Fe-4S] cluster</name>
        <dbReference type="ChEBI" id="CHEBI:49883"/>
        <label>1</label>
    </ligand>
</feature>
<feature type="binding site" evidence="1">
    <location>
        <position position="143"/>
    </location>
    <ligand>
        <name>[4Fe-4S] cluster</name>
        <dbReference type="ChEBI" id="CHEBI:49883"/>
        <label>1</label>
    </ligand>
</feature>
<feature type="binding site" evidence="1">
    <location>
        <position position="163"/>
    </location>
    <ligand>
        <name>[4Fe-4S] cluster</name>
        <dbReference type="ChEBI" id="CHEBI:49883"/>
        <label>2</label>
        <note>4Fe-4S-S-AdoMet</note>
    </ligand>
</feature>
<feature type="binding site" evidence="1">
    <location>
        <position position="167"/>
    </location>
    <ligand>
        <name>[4Fe-4S] cluster</name>
        <dbReference type="ChEBI" id="CHEBI:49883"/>
        <label>2</label>
        <note>4Fe-4S-S-AdoMet</note>
    </ligand>
</feature>
<feature type="binding site" evidence="1">
    <location>
        <position position="170"/>
    </location>
    <ligand>
        <name>[4Fe-4S] cluster</name>
        <dbReference type="ChEBI" id="CHEBI:49883"/>
        <label>2</label>
        <note>4Fe-4S-S-AdoMet</note>
    </ligand>
</feature>
<feature type="binding site" evidence="1">
    <location>
        <position position="378"/>
    </location>
    <ligand>
        <name>[4Fe-4S] cluster</name>
        <dbReference type="ChEBI" id="CHEBI:49883"/>
        <label>1</label>
    </ligand>
</feature>
<sequence>MATSIPRSRCFLTSSTLKVVPRSRTPLRSFATTSDTPQTSVPEAPGKRSRPPTSFSDTLNAGPSFGDFVNPNAPLSPTEAYEIKTVQVGPEGRKKTITRLPEWLRTPIPSNANQNYKQIKKDLRGLNLATVCEEARCPNISDCWGGSSKSAATATIMLMGDTCTRGCRFCAVKTSKAPPPLDPHEPENTAEALRRWGLGYVVITVVDRDDLADSGAHHIAETIMKIKQKNPTQLVELLGGDYGGNLEMAKVVARSGVDVFAHNIETTERLTPFVRDRRAKFRQSLDVLRSAKEERPELITKTSMMLGLGETDEDLWHALRELRANNVDVVTFGQYMRPTKRHMAVHDYVTPDKFELWRQRALDMGFLYCASGPLVRSSYKAGEAFIENVLKKRRLGSSAGKNDVAELSAAEEVGKAL</sequence>
<keyword id="KW-0004">4Fe-4S</keyword>
<keyword id="KW-0408">Iron</keyword>
<keyword id="KW-0411">Iron-sulfur</keyword>
<keyword id="KW-0479">Metal-binding</keyword>
<keyword id="KW-0496">Mitochondrion</keyword>
<keyword id="KW-1185">Reference proteome</keyword>
<keyword id="KW-0949">S-adenosyl-L-methionine</keyword>
<keyword id="KW-0808">Transferase</keyword>
<keyword id="KW-0809">Transit peptide</keyword>
<gene>
    <name type="ORF">PTRG_06961</name>
</gene>
<reference key="1">
    <citation type="journal article" date="2013" name="G3 (Bethesda)">
        <title>Comparative genomics of a plant-pathogenic fungus, Pyrenophora tritici-repentis, reveals transduplication and the impact of repeat elements on pathogenicity and population divergence.</title>
        <authorList>
            <person name="Manning V.A."/>
            <person name="Pandelova I."/>
            <person name="Dhillon B."/>
            <person name="Wilhelm L.J."/>
            <person name="Goodwin S.B."/>
            <person name="Berlin A.M."/>
            <person name="Figueroa M."/>
            <person name="Freitag M."/>
            <person name="Hane J.K."/>
            <person name="Henrissat B."/>
            <person name="Holman W.H."/>
            <person name="Kodira C.D."/>
            <person name="Martin J."/>
            <person name="Oliver R.P."/>
            <person name="Robbertse B."/>
            <person name="Schackwitz W."/>
            <person name="Schwartz D.C."/>
            <person name="Spatafora J.W."/>
            <person name="Turgeon B.G."/>
            <person name="Yandava C."/>
            <person name="Young S."/>
            <person name="Zhou S."/>
            <person name="Zeng Q."/>
            <person name="Grigoriev I.V."/>
            <person name="Ma L.-J."/>
            <person name="Ciuffetti L.M."/>
        </authorList>
    </citation>
    <scope>NUCLEOTIDE SEQUENCE [LARGE SCALE GENOMIC DNA]</scope>
    <source>
        <strain>Pt-1C-BFP</strain>
    </source>
</reference>
<protein>
    <recommendedName>
        <fullName evidence="1">Lipoyl synthase, mitochondrial</fullName>
        <ecNumber evidence="1">2.8.1.8</ecNumber>
    </recommendedName>
    <alternativeName>
        <fullName evidence="1">Lipoate synthase</fullName>
        <shortName evidence="1">LS</shortName>
        <shortName evidence="1">Lip-syn</shortName>
    </alternativeName>
    <alternativeName>
        <fullName evidence="1">Lipoic acid synthase</fullName>
    </alternativeName>
</protein>
<name>LIPA_PYRTR</name>
<proteinExistence type="inferred from homology"/>
<evidence type="ECO:0000255" key="1">
    <source>
        <dbReference type="HAMAP-Rule" id="MF_03123"/>
    </source>
</evidence>
<evidence type="ECO:0000255" key="2">
    <source>
        <dbReference type="PROSITE-ProRule" id="PRU01266"/>
    </source>
</evidence>
<evidence type="ECO:0000256" key="3">
    <source>
        <dbReference type="SAM" id="MobiDB-lite"/>
    </source>
</evidence>